<keyword id="KW-0067">ATP-binding</keyword>
<keyword id="KW-0255">Endonuclease</keyword>
<keyword id="KW-0347">Helicase</keyword>
<keyword id="KW-0378">Hydrolase</keyword>
<keyword id="KW-0460">Magnesium</keyword>
<keyword id="KW-0464">Manganese</keyword>
<keyword id="KW-0479">Metal-binding</keyword>
<keyword id="KW-0540">Nuclease</keyword>
<keyword id="KW-0547">Nucleotide-binding</keyword>
<keyword id="KW-0539">Nucleus</keyword>
<keyword id="KW-1185">Reference proteome</keyword>
<keyword id="KW-0677">Repeat</keyword>
<keyword id="KW-0694">RNA-binding</keyword>
<keyword id="KW-0943">RNA-mediated gene silencing</keyword>
<reference key="1">
    <citation type="journal article" date="2002" name="Nature">
        <title>The genome sequence and structure of rice chromosome 1.</title>
        <authorList>
            <person name="Sasaki T."/>
            <person name="Matsumoto T."/>
            <person name="Yamamoto K."/>
            <person name="Sakata K."/>
            <person name="Baba T."/>
            <person name="Katayose Y."/>
            <person name="Wu J."/>
            <person name="Niimura Y."/>
            <person name="Cheng Z."/>
            <person name="Nagamura Y."/>
            <person name="Antonio B.A."/>
            <person name="Kanamori H."/>
            <person name="Hosokawa S."/>
            <person name="Masukawa M."/>
            <person name="Arikawa K."/>
            <person name="Chiden Y."/>
            <person name="Hayashi M."/>
            <person name="Okamoto M."/>
            <person name="Ando T."/>
            <person name="Aoki H."/>
            <person name="Arita K."/>
            <person name="Hamada M."/>
            <person name="Harada C."/>
            <person name="Hijishita S."/>
            <person name="Honda M."/>
            <person name="Ichikawa Y."/>
            <person name="Idonuma A."/>
            <person name="Iijima M."/>
            <person name="Ikeda M."/>
            <person name="Ikeno M."/>
            <person name="Ito S."/>
            <person name="Ito T."/>
            <person name="Ito Y."/>
            <person name="Ito Y."/>
            <person name="Iwabuchi A."/>
            <person name="Kamiya K."/>
            <person name="Karasawa W."/>
            <person name="Katagiri S."/>
            <person name="Kikuta A."/>
            <person name="Kobayashi N."/>
            <person name="Kono I."/>
            <person name="Machita K."/>
            <person name="Maehara T."/>
            <person name="Mizuno H."/>
            <person name="Mizubayashi T."/>
            <person name="Mukai Y."/>
            <person name="Nagasaki H."/>
            <person name="Nakashima M."/>
            <person name="Nakama Y."/>
            <person name="Nakamichi Y."/>
            <person name="Nakamura M."/>
            <person name="Namiki N."/>
            <person name="Negishi M."/>
            <person name="Ohta I."/>
            <person name="Ono N."/>
            <person name="Saji S."/>
            <person name="Sakai K."/>
            <person name="Shibata M."/>
            <person name="Shimokawa T."/>
            <person name="Shomura A."/>
            <person name="Song J."/>
            <person name="Takazaki Y."/>
            <person name="Terasawa K."/>
            <person name="Tsuji K."/>
            <person name="Waki K."/>
            <person name="Yamagata H."/>
            <person name="Yamane H."/>
            <person name="Yoshiki S."/>
            <person name="Yoshihara R."/>
            <person name="Yukawa K."/>
            <person name="Zhong H."/>
            <person name="Iwama H."/>
            <person name="Endo T."/>
            <person name="Ito H."/>
            <person name="Hahn J.H."/>
            <person name="Kim H.-I."/>
            <person name="Eun M.-Y."/>
            <person name="Yano M."/>
            <person name="Jiang J."/>
            <person name="Gojobori T."/>
        </authorList>
    </citation>
    <scope>NUCLEOTIDE SEQUENCE [LARGE SCALE GENOMIC DNA]</scope>
    <source>
        <strain>cv. Nipponbare</strain>
    </source>
</reference>
<reference key="2">
    <citation type="journal article" date="2005" name="Nature">
        <title>The map-based sequence of the rice genome.</title>
        <authorList>
            <consortium name="International rice genome sequencing project (IRGSP)"/>
        </authorList>
    </citation>
    <scope>NUCLEOTIDE SEQUENCE [LARGE SCALE GENOMIC DNA]</scope>
    <source>
        <strain>cv. Nipponbare</strain>
    </source>
</reference>
<reference key="3">
    <citation type="journal article" date="2008" name="Nucleic Acids Res.">
        <title>The rice annotation project database (RAP-DB): 2008 update.</title>
        <authorList>
            <consortium name="The rice annotation project (RAP)"/>
        </authorList>
    </citation>
    <scope>GENOME REANNOTATION</scope>
    <source>
        <strain>cv. Nipponbare</strain>
    </source>
</reference>
<reference key="4">
    <citation type="journal article" date="2013" name="Rice">
        <title>Improvement of the Oryza sativa Nipponbare reference genome using next generation sequence and optical map data.</title>
        <authorList>
            <person name="Kawahara Y."/>
            <person name="de la Bastide M."/>
            <person name="Hamilton J.P."/>
            <person name="Kanamori H."/>
            <person name="McCombie W.R."/>
            <person name="Ouyang S."/>
            <person name="Schwartz D.C."/>
            <person name="Tanaka T."/>
            <person name="Wu J."/>
            <person name="Zhou S."/>
            <person name="Childs K.L."/>
            <person name="Davidson R.M."/>
            <person name="Lin H."/>
            <person name="Quesada-Ocampo L."/>
            <person name="Vaillancourt B."/>
            <person name="Sakai H."/>
            <person name="Lee S.S."/>
            <person name="Kim J."/>
            <person name="Numa H."/>
            <person name="Itoh T."/>
            <person name="Buell C.R."/>
            <person name="Matsumoto T."/>
        </authorList>
    </citation>
    <scope>GENOME REANNOTATION</scope>
    <source>
        <strain>cv. Nipponbare</strain>
    </source>
</reference>
<reference key="5">
    <citation type="journal article" date="2003" name="Science">
        <title>Collection, mapping, and annotation of over 28,000 cDNA clones from japonica rice.</title>
        <authorList>
            <consortium name="The rice full-length cDNA consortium"/>
        </authorList>
    </citation>
    <scope>NUCLEOTIDE SEQUENCE [LARGE SCALE MRNA]</scope>
    <source>
        <strain>cv. Nipponbare</strain>
    </source>
</reference>
<reference key="6">
    <citation type="journal article" date="2008" name="BMC Genomics">
        <title>Genome-wide identification, organization and phylogenetic analysis of dicer-like, argonaute and RNA-dependent RNA polymerase gene families and their expression analysis during reproductive development and stress in rice.</title>
        <authorList>
            <person name="Kapoor M."/>
            <person name="Arora R."/>
            <person name="Lama T."/>
            <person name="Nijhawan A."/>
            <person name="Khurana J.P."/>
            <person name="Tyagi A.K."/>
            <person name="Kapoor S."/>
        </authorList>
    </citation>
    <scope>TISSUE SPECIFICITY</scope>
    <scope>GENE FAMILY</scope>
    <scope>NOMENCLATURE</scope>
</reference>
<proteinExistence type="evidence at transcript level"/>
<organism>
    <name type="scientific">Oryza sativa subsp. japonica</name>
    <name type="common">Rice</name>
    <dbReference type="NCBI Taxonomy" id="39947"/>
    <lineage>
        <taxon>Eukaryota</taxon>
        <taxon>Viridiplantae</taxon>
        <taxon>Streptophyta</taxon>
        <taxon>Embryophyta</taxon>
        <taxon>Tracheophyta</taxon>
        <taxon>Spermatophyta</taxon>
        <taxon>Magnoliopsida</taxon>
        <taxon>Liliopsida</taxon>
        <taxon>Poales</taxon>
        <taxon>Poaceae</taxon>
        <taxon>BOP clade</taxon>
        <taxon>Oryzoideae</taxon>
        <taxon>Oryzeae</taxon>
        <taxon>Oryzinae</taxon>
        <taxon>Oryza</taxon>
        <taxon>Oryza sativa</taxon>
    </lineage>
</organism>
<accession>Q5N870</accession>
<accession>A0A0P0VC26</accession>
<feature type="chain" id="PRO_0000378419" description="Endoribonuclease Dicer homolog 3a">
    <location>
        <begin position="1"/>
        <end position="1651"/>
    </location>
</feature>
<feature type="domain" description="Helicase ATP-binding" evidence="4">
    <location>
        <begin position="39"/>
        <end position="214"/>
    </location>
</feature>
<feature type="domain" description="Helicase C-terminal" evidence="5">
    <location>
        <begin position="402"/>
        <end position="563"/>
    </location>
</feature>
<feature type="domain" description="Dicer dsRNA-binding fold" evidence="6">
    <location>
        <begin position="587"/>
        <end position="677"/>
    </location>
</feature>
<feature type="domain" description="PAZ" evidence="2">
    <location>
        <begin position="879"/>
        <end position="1006"/>
    </location>
</feature>
<feature type="domain" description="RNase III 1" evidence="3">
    <location>
        <begin position="1031"/>
        <end position="1200"/>
    </location>
</feature>
<feature type="domain" description="RNase III 2" evidence="3">
    <location>
        <begin position="1241"/>
        <end position="1389"/>
    </location>
</feature>
<feature type="domain" description="DRBM">
    <location>
        <begin position="1413"/>
        <end position="1481"/>
    </location>
</feature>
<feature type="region of interest" description="Disordered" evidence="7">
    <location>
        <begin position="1"/>
        <end position="25"/>
    </location>
</feature>
<feature type="short sequence motif" description="DECH box" evidence="1">
    <location>
        <begin position="161"/>
        <end position="164"/>
    </location>
</feature>
<feature type="binding site" evidence="4">
    <location>
        <begin position="52"/>
        <end position="59"/>
    </location>
    <ligand>
        <name>ATP</name>
        <dbReference type="ChEBI" id="CHEBI:30616"/>
    </ligand>
</feature>
<feature type="binding site" evidence="1">
    <location>
        <position position="1280"/>
    </location>
    <ligand>
        <name>Mg(2+)</name>
        <dbReference type="ChEBI" id="CHEBI:18420"/>
    </ligand>
</feature>
<feature type="binding site" evidence="1">
    <location>
        <position position="1375"/>
    </location>
    <ligand>
        <name>Mg(2+)</name>
        <dbReference type="ChEBI" id="CHEBI:18420"/>
    </ligand>
</feature>
<feature type="binding site" evidence="1">
    <location>
        <position position="1378"/>
    </location>
    <ligand>
        <name>Mg(2+)</name>
        <dbReference type="ChEBI" id="CHEBI:18420"/>
    </ligand>
</feature>
<feature type="site" description="Important for activity" evidence="1">
    <location>
        <position position="1371"/>
    </location>
</feature>
<comment type="function">
    <text evidence="1">Probably involved in the RNA silencing pathway. May cleave double-stranded RNA to produce short 21-24 nucleotides (nt) RNAs which target the selective destruction of complementary RNAs (By similarity).</text>
</comment>
<comment type="cofactor">
    <cofactor evidence="1">
        <name>Mg(2+)</name>
        <dbReference type="ChEBI" id="CHEBI:18420"/>
    </cofactor>
    <cofactor evidence="1">
        <name>Mn(2+)</name>
        <dbReference type="ChEBI" id="CHEBI:29035"/>
    </cofactor>
</comment>
<comment type="subunit">
    <text evidence="1">May interact with ARGONAUTE1 or PINHEAD through their common PAZ domains.</text>
</comment>
<comment type="subcellular location">
    <subcellularLocation>
        <location evidence="9">Nucleus</location>
    </subcellularLocation>
</comment>
<comment type="tissue specificity">
    <text evidence="8">Expressed in roots, shoot apical meristem (SAM), leaves, panicles and seeds.</text>
</comment>
<comment type="similarity">
    <text evidence="6">Belongs to the helicase family. Dicer subfamily.</text>
</comment>
<comment type="sequence caution" evidence="9">
    <conflict type="frameshift">
        <sequence resource="EMBL" id="AK120075"/>
    </conflict>
</comment>
<sequence length="1651" mass="184892">MNPLKRSLESSSQEHEAGKQKLQKRECQDFTPRRYQLDVYEVAMRRNTIAMLDTGAGKTMIAVMLIKEFGKINRTKNAGKVIIFLAPTVQLVTQQCEVIEIHTDFEVEQYYGAKGVDQWTGPRWQEQISKYQVMVMTPQVFLQALRNAFLILDMVSLMIFDECHHATGNHPYTRIMKEFYHKSEHKPSVFGMTASPVIRKGISSHLDCEGQFCELENLLDAKIYTVSDREEIEFCVPSAKEMCRYYDSKPVCFEDLSEELGVLCSKYDALITELQNKRSDMYKDADDITKESKRRLSKSIAKICYCLDDVGLICASEATKICIERGQEKGWLKEVVDATDQQTDANGSRLFAENSALHMKFFEEALHLIDKRLQQGIDMLLNSESGCVEAAKTGYISPKLYELIQIFHSFSNSRHARCLIFVDRKITARVIDRMIKKIGHLAHFTVSFLTGGRSSVDALTPKMQKDTLDSFRSGKVNLLFTTDVAEEGIHVPECSCVIRFDLPRTTRSYVQSRGRARQEDSQYILMIERGNVKQNDLISAIVRSETSMVKIASSRESGNLSPGFVPNEEINEYHVGTTGAKVTADSSISIVYRYCEKLPQDKCYSPKPTFEFTHHDDGYVCTLALPPSAVLQILVGPKARNMHKAKQLVCLDACKKLHELGALDDHLCLSVEDPVPEIVSKNKGTGIGTTKRKELHGTTRIHAWSGNWVSKKTALKLQSYKMNFVCDQAGQIYSEFVLLIDATLPDEVATLEIDLYLHDKMVKTSVSSCGLLELDAQQMEQAKLFQGLLFNGLFGKLFTRSKVPNAPREFILNKEDTFVWNTASVYLLLPTNPSFDSNVCINWSVIDAAATAVKLMRRIYSENKRELLGIFDSDQNVGDLIHLANKSCKANSLKDMVVLAVHTGKIYTALDITELSGDSAFDGASDKKECKFRTFAEYFKKKYGIVLRHPSQPLLVLKPSHNPHNLLSSKFRDEGNVVENMSNGTPVVNKTSNRVHMPPELLIPLDLPVEILRSFYLFPALMYRIESLTLASQLRSEIGYSDSNISSFLILEAITTLRCSEDFSMERLELLGDSVLKYAVSCHLFLKFPNKDEGQLSSIRCHMICNATLYKLGIERNVQGYVRDAAFDPRRWLAPGQLSIRPSPCECPVKSEVVTDDIHIIDDKAIVLGKACDKGHRWMCSKTIADCVEAIIGAYYAGGGLRAAMAVLKWLGIGAEIEEDLIVQAILSASVQTYLPKDNVFEMLEAKLGYSFSVKGLLVEALTHPSQQELGAKYCYERLEFLGDAVLDILLTRYLFNSHKDTNEGELTDLRSASVNNENFAQVAVKHNFHHFLQHSSGLLLDQITEYVNRLEGSSMDKVELLSDGLPKGPKVLGDIVESIAGAILLDTKLDLDVVWGIFEPLLSPIVTPENLELPPYRELIEWCGKHGYFVGINCRDQGDTVVATLDVQLKEVLLVRQGFSKKRKDAKAHASSLLLKDLEEKGLIIPKNASKTEQFEKHCGSTNPFNNLHVDAMDTQTPKPTKEKNAADSRNISDPLLGKPLHVIVKTSKGGPRIALYELCKKLQWPMPTMESEKVQPSFSSVCSSPGGSSQKATPQAFAFASTITLHIPNADVISLTGDGRADKKSSQDSAALFLLYELQRRGTLQLQEV</sequence>
<dbReference type="EC" id="3.1.26.-"/>
<dbReference type="EMBL" id="AP003416">
    <property type="protein sequence ID" value="BAD82327.1"/>
    <property type="molecule type" value="Genomic_DNA"/>
</dbReference>
<dbReference type="EMBL" id="AP008207">
    <property type="protein sequence ID" value="BAF07062.1"/>
    <property type="molecule type" value="Genomic_DNA"/>
</dbReference>
<dbReference type="EMBL" id="AP014957">
    <property type="protein sequence ID" value="BAS75821.1"/>
    <property type="molecule type" value="Genomic_DNA"/>
</dbReference>
<dbReference type="EMBL" id="AK120075">
    <property type="status" value="NOT_ANNOTATED_CDS"/>
    <property type="molecule type" value="mRNA"/>
</dbReference>
<dbReference type="SMR" id="Q5N870"/>
<dbReference type="FunCoup" id="Q5N870">
    <property type="interactions" value="1634"/>
</dbReference>
<dbReference type="STRING" id="39947.Q5N870"/>
<dbReference type="PaxDb" id="39947-Q5N870"/>
<dbReference type="EnsemblPlants" id="Os01t0909200-01">
    <property type="protein sequence ID" value="Os01t0909200-01"/>
    <property type="gene ID" value="Os01g0909200"/>
</dbReference>
<dbReference type="GeneID" id="4324864"/>
<dbReference type="Gramene" id="Os01t0909200-01">
    <property type="protein sequence ID" value="Os01t0909200-01"/>
    <property type="gene ID" value="Os01g0909200"/>
</dbReference>
<dbReference type="KEGG" id="dosa:Os01g0909200"/>
<dbReference type="KEGG" id="osa:4324864"/>
<dbReference type="eggNOG" id="KOG0701">
    <property type="taxonomic scope" value="Eukaryota"/>
</dbReference>
<dbReference type="HOGENOM" id="CLU_000907_4_4_1"/>
<dbReference type="InParanoid" id="Q5N870"/>
<dbReference type="OMA" id="TRKNHAY"/>
<dbReference type="OrthoDB" id="6513042at2759"/>
<dbReference type="Proteomes" id="UP000000763">
    <property type="component" value="Chromosome 1"/>
</dbReference>
<dbReference type="Proteomes" id="UP000059680">
    <property type="component" value="Chromosome 1"/>
</dbReference>
<dbReference type="GO" id="GO:0005737">
    <property type="term" value="C:cytoplasm"/>
    <property type="evidence" value="ECO:0000318"/>
    <property type="project" value="GO_Central"/>
</dbReference>
<dbReference type="GO" id="GO:0005634">
    <property type="term" value="C:nucleus"/>
    <property type="evidence" value="ECO:0000318"/>
    <property type="project" value="GO_Central"/>
</dbReference>
<dbReference type="GO" id="GO:0005524">
    <property type="term" value="F:ATP binding"/>
    <property type="evidence" value="ECO:0007669"/>
    <property type="project" value="UniProtKB-KW"/>
</dbReference>
<dbReference type="GO" id="GO:0004386">
    <property type="term" value="F:helicase activity"/>
    <property type="evidence" value="ECO:0007669"/>
    <property type="project" value="UniProtKB-KW"/>
</dbReference>
<dbReference type="GO" id="GO:0046872">
    <property type="term" value="F:metal ion binding"/>
    <property type="evidence" value="ECO:0007669"/>
    <property type="project" value="UniProtKB-KW"/>
</dbReference>
<dbReference type="GO" id="GO:0004525">
    <property type="term" value="F:ribonuclease III activity"/>
    <property type="evidence" value="ECO:0000318"/>
    <property type="project" value="GO_Central"/>
</dbReference>
<dbReference type="GO" id="GO:0003723">
    <property type="term" value="F:RNA binding"/>
    <property type="evidence" value="ECO:0000318"/>
    <property type="project" value="GO_Central"/>
</dbReference>
<dbReference type="GO" id="GO:0030422">
    <property type="term" value="P:siRNA processing"/>
    <property type="evidence" value="ECO:0000318"/>
    <property type="project" value="GO_Central"/>
</dbReference>
<dbReference type="CDD" id="cd18034">
    <property type="entry name" value="DEXHc_dicer"/>
    <property type="match status" value="1"/>
</dbReference>
<dbReference type="CDD" id="cd02844">
    <property type="entry name" value="PAZ_CAF_like"/>
    <property type="match status" value="1"/>
</dbReference>
<dbReference type="CDD" id="cd00593">
    <property type="entry name" value="RIBOc"/>
    <property type="match status" value="2"/>
</dbReference>
<dbReference type="CDD" id="cd18802">
    <property type="entry name" value="SF2_C_dicer"/>
    <property type="match status" value="1"/>
</dbReference>
<dbReference type="FunFam" id="1.10.1520.10:FF:000008">
    <property type="entry name" value="Dicer-like 104"/>
    <property type="match status" value="1"/>
</dbReference>
<dbReference type="FunFam" id="2.170.260.10:FF:000004">
    <property type="entry name" value="Dicer-like 104"/>
    <property type="match status" value="1"/>
</dbReference>
<dbReference type="FunFam" id="3.30.160.20:FF:000038">
    <property type="entry name" value="Dicer-like 104"/>
    <property type="match status" value="1"/>
</dbReference>
<dbReference type="FunFam" id="1.10.1520.10:FF:000004">
    <property type="entry name" value="Endoribonuclease dicer-like 1"/>
    <property type="match status" value="1"/>
</dbReference>
<dbReference type="FunFam" id="3.30.160.380:FF:000001">
    <property type="entry name" value="Endoribonuclease dicer-like 1"/>
    <property type="match status" value="1"/>
</dbReference>
<dbReference type="FunFam" id="3.40.50.300:FF:000420">
    <property type="entry name" value="Endoribonuclease dicer-like 1"/>
    <property type="match status" value="1"/>
</dbReference>
<dbReference type="FunFam" id="3.40.50.300:FF:000705">
    <property type="entry name" value="Endoribonuclease dicer-like protein"/>
    <property type="match status" value="1"/>
</dbReference>
<dbReference type="Gene3D" id="3.30.160.20">
    <property type="match status" value="1"/>
</dbReference>
<dbReference type="Gene3D" id="3.30.160.380">
    <property type="entry name" value="Dicer dimerisation domain"/>
    <property type="match status" value="1"/>
</dbReference>
<dbReference type="Gene3D" id="3.40.50.300">
    <property type="entry name" value="P-loop containing nucleotide triphosphate hydrolases"/>
    <property type="match status" value="2"/>
</dbReference>
<dbReference type="Gene3D" id="2.170.260.10">
    <property type="entry name" value="paz domain"/>
    <property type="match status" value="1"/>
</dbReference>
<dbReference type="Gene3D" id="1.10.1520.10">
    <property type="entry name" value="Ribonuclease III domain"/>
    <property type="match status" value="2"/>
</dbReference>
<dbReference type="InterPro" id="IPR011545">
    <property type="entry name" value="DEAD/DEAH_box_helicase_dom"/>
</dbReference>
<dbReference type="InterPro" id="IPR038248">
    <property type="entry name" value="Dicer_dimer_sf"/>
</dbReference>
<dbReference type="InterPro" id="IPR005034">
    <property type="entry name" value="Dicer_dimerisation_dom"/>
</dbReference>
<dbReference type="InterPro" id="IPR014001">
    <property type="entry name" value="Helicase_ATP-bd"/>
</dbReference>
<dbReference type="InterPro" id="IPR001650">
    <property type="entry name" value="Helicase_C-like"/>
</dbReference>
<dbReference type="InterPro" id="IPR027417">
    <property type="entry name" value="P-loop_NTPase"/>
</dbReference>
<dbReference type="InterPro" id="IPR003100">
    <property type="entry name" value="PAZ_dom"/>
</dbReference>
<dbReference type="InterPro" id="IPR036085">
    <property type="entry name" value="PAZ_dom_sf"/>
</dbReference>
<dbReference type="InterPro" id="IPR000999">
    <property type="entry name" value="RNase_III_dom"/>
</dbReference>
<dbReference type="InterPro" id="IPR036389">
    <property type="entry name" value="RNase_III_sf"/>
</dbReference>
<dbReference type="PANTHER" id="PTHR14950">
    <property type="entry name" value="DICER-RELATED"/>
    <property type="match status" value="1"/>
</dbReference>
<dbReference type="PANTHER" id="PTHR14950:SF46">
    <property type="entry name" value="ENDORIBONUCLEASE DICER HOMOLOG 3"/>
    <property type="match status" value="1"/>
</dbReference>
<dbReference type="Pfam" id="PF00270">
    <property type="entry name" value="DEAD"/>
    <property type="match status" value="1"/>
</dbReference>
<dbReference type="Pfam" id="PF03368">
    <property type="entry name" value="Dicer_dimer"/>
    <property type="match status" value="1"/>
</dbReference>
<dbReference type="Pfam" id="PF00271">
    <property type="entry name" value="Helicase_C"/>
    <property type="match status" value="1"/>
</dbReference>
<dbReference type="Pfam" id="PF02170">
    <property type="entry name" value="PAZ"/>
    <property type="match status" value="1"/>
</dbReference>
<dbReference type="Pfam" id="PF00636">
    <property type="entry name" value="Ribonuclease_3"/>
    <property type="match status" value="2"/>
</dbReference>
<dbReference type="SMART" id="SM00487">
    <property type="entry name" value="DEXDc"/>
    <property type="match status" value="1"/>
</dbReference>
<dbReference type="SMART" id="SM00490">
    <property type="entry name" value="HELICc"/>
    <property type="match status" value="1"/>
</dbReference>
<dbReference type="SMART" id="SM00949">
    <property type="entry name" value="PAZ"/>
    <property type="match status" value="1"/>
</dbReference>
<dbReference type="SMART" id="SM00535">
    <property type="entry name" value="RIBOc"/>
    <property type="match status" value="2"/>
</dbReference>
<dbReference type="SUPFAM" id="SSF52540">
    <property type="entry name" value="P-loop containing nucleoside triphosphate hydrolases"/>
    <property type="match status" value="1"/>
</dbReference>
<dbReference type="SUPFAM" id="SSF101690">
    <property type="entry name" value="PAZ domain"/>
    <property type="match status" value="1"/>
</dbReference>
<dbReference type="SUPFAM" id="SSF69065">
    <property type="entry name" value="RNase III domain-like"/>
    <property type="match status" value="2"/>
</dbReference>
<dbReference type="PROSITE" id="PS51327">
    <property type="entry name" value="DICER_DSRBF"/>
    <property type="match status" value="1"/>
</dbReference>
<dbReference type="PROSITE" id="PS51192">
    <property type="entry name" value="HELICASE_ATP_BIND_1"/>
    <property type="match status" value="1"/>
</dbReference>
<dbReference type="PROSITE" id="PS51194">
    <property type="entry name" value="HELICASE_CTER"/>
    <property type="match status" value="1"/>
</dbReference>
<dbReference type="PROSITE" id="PS50821">
    <property type="entry name" value="PAZ"/>
    <property type="match status" value="1"/>
</dbReference>
<dbReference type="PROSITE" id="PS00517">
    <property type="entry name" value="RNASE_3_1"/>
    <property type="match status" value="1"/>
</dbReference>
<dbReference type="PROSITE" id="PS50142">
    <property type="entry name" value="RNASE_3_2"/>
    <property type="match status" value="2"/>
</dbReference>
<name>DCL3A_ORYSJ</name>
<gene>
    <name type="primary">DCL3A</name>
    <name type="ordered locus">Os01g0909200</name>
    <name type="ordered locus">LOC_Os01g68120</name>
    <name type="ORF">P0456E05.21</name>
</gene>
<evidence type="ECO:0000250" key="1"/>
<evidence type="ECO:0000255" key="2">
    <source>
        <dbReference type="PROSITE-ProRule" id="PRU00142"/>
    </source>
</evidence>
<evidence type="ECO:0000255" key="3">
    <source>
        <dbReference type="PROSITE-ProRule" id="PRU00177"/>
    </source>
</evidence>
<evidence type="ECO:0000255" key="4">
    <source>
        <dbReference type="PROSITE-ProRule" id="PRU00541"/>
    </source>
</evidence>
<evidence type="ECO:0000255" key="5">
    <source>
        <dbReference type="PROSITE-ProRule" id="PRU00542"/>
    </source>
</evidence>
<evidence type="ECO:0000255" key="6">
    <source>
        <dbReference type="PROSITE-ProRule" id="PRU00657"/>
    </source>
</evidence>
<evidence type="ECO:0000256" key="7">
    <source>
        <dbReference type="SAM" id="MobiDB-lite"/>
    </source>
</evidence>
<evidence type="ECO:0000269" key="8">
    <source>
    </source>
</evidence>
<evidence type="ECO:0000305" key="9"/>
<protein>
    <recommendedName>
        <fullName>Endoribonuclease Dicer homolog 3a</fullName>
    </recommendedName>
    <alternativeName>
        <fullName>Dicer-like protein 3a</fullName>
        <shortName>OsDCL3a</shortName>
        <ecNumber>3.1.26.-</ecNumber>
    </alternativeName>
</protein>